<name>PGK_METEP</name>
<feature type="chain" id="PRO_1000203340" description="Phosphoglycerate kinase">
    <location>
        <begin position="1"/>
        <end position="400"/>
    </location>
</feature>
<feature type="binding site" evidence="1">
    <location>
        <begin position="23"/>
        <end position="25"/>
    </location>
    <ligand>
        <name>substrate</name>
    </ligand>
</feature>
<feature type="binding site" evidence="1">
    <location>
        <position position="38"/>
    </location>
    <ligand>
        <name>substrate</name>
    </ligand>
</feature>
<feature type="binding site" evidence="1">
    <location>
        <begin position="61"/>
        <end position="64"/>
    </location>
    <ligand>
        <name>substrate</name>
    </ligand>
</feature>
<feature type="binding site" evidence="1">
    <location>
        <position position="120"/>
    </location>
    <ligand>
        <name>substrate</name>
    </ligand>
</feature>
<feature type="binding site" evidence="1">
    <location>
        <position position="153"/>
    </location>
    <ligand>
        <name>substrate</name>
    </ligand>
</feature>
<feature type="binding site" evidence="1">
    <location>
        <position position="203"/>
    </location>
    <ligand>
        <name>ATP</name>
        <dbReference type="ChEBI" id="CHEBI:30616"/>
    </ligand>
</feature>
<feature type="binding site" evidence="1">
    <location>
        <position position="325"/>
    </location>
    <ligand>
        <name>ATP</name>
        <dbReference type="ChEBI" id="CHEBI:30616"/>
    </ligand>
</feature>
<feature type="binding site" evidence="1">
    <location>
        <begin position="355"/>
        <end position="358"/>
    </location>
    <ligand>
        <name>ATP</name>
        <dbReference type="ChEBI" id="CHEBI:30616"/>
    </ligand>
</feature>
<accession>A9W5A7</accession>
<protein>
    <recommendedName>
        <fullName evidence="1">Phosphoglycerate kinase</fullName>
        <ecNumber evidence="1">2.7.2.3</ecNumber>
    </recommendedName>
</protein>
<sequence length="400" mass="41819">MTDFRTLDDAGPLQGKRVLLRVDLNVPMEGGRVTDATRIERVVPTIREIADAGGRVILLAHFGRPKGKPDPKDSLKPILSTLSEKLGRPVAFGEDCVGEAAASAIAALKDGDVILLENTRYHAGEEKNDPDFAKALAANGDIYVNEAFSAAHRAHASTEALARLLPAYAGRLMQAELDALTKGLEAPARPVIAIVGGAKVSTKIDLLENLVAKVDMLVIGGGMANTFLHAQGKDVGKSLCEKDLAETAKRILAAAKEKNCTIILPVDALVAREFKANAENETVPVDAVPSDAMILDVGASSIATIDGAIEEARTLVWNGPLGAFELTPFDTGTVAVAQHAARRTKAGQLVSVAGGGDTVAALNHAGVGEDFSYVSTAGGAFLEWLEGKELPGVEALRAQG</sequence>
<comment type="catalytic activity">
    <reaction evidence="1">
        <text>(2R)-3-phosphoglycerate + ATP = (2R)-3-phospho-glyceroyl phosphate + ADP</text>
        <dbReference type="Rhea" id="RHEA:14801"/>
        <dbReference type="ChEBI" id="CHEBI:30616"/>
        <dbReference type="ChEBI" id="CHEBI:57604"/>
        <dbReference type="ChEBI" id="CHEBI:58272"/>
        <dbReference type="ChEBI" id="CHEBI:456216"/>
        <dbReference type="EC" id="2.7.2.3"/>
    </reaction>
</comment>
<comment type="pathway">
    <text evidence="1">Carbohydrate degradation; glycolysis; pyruvate from D-glyceraldehyde 3-phosphate: step 2/5.</text>
</comment>
<comment type="subunit">
    <text evidence="1">Monomer.</text>
</comment>
<comment type="subcellular location">
    <subcellularLocation>
        <location evidence="1">Cytoplasm</location>
    </subcellularLocation>
</comment>
<comment type="similarity">
    <text evidence="1">Belongs to the phosphoglycerate kinase family.</text>
</comment>
<evidence type="ECO:0000255" key="1">
    <source>
        <dbReference type="HAMAP-Rule" id="MF_00145"/>
    </source>
</evidence>
<keyword id="KW-0067">ATP-binding</keyword>
<keyword id="KW-0963">Cytoplasm</keyword>
<keyword id="KW-0324">Glycolysis</keyword>
<keyword id="KW-0418">Kinase</keyword>
<keyword id="KW-0547">Nucleotide-binding</keyword>
<keyword id="KW-0808">Transferase</keyword>
<dbReference type="EC" id="2.7.2.3" evidence="1"/>
<dbReference type="EMBL" id="CP000908">
    <property type="protein sequence ID" value="ABY30763.1"/>
    <property type="molecule type" value="Genomic_DNA"/>
</dbReference>
<dbReference type="RefSeq" id="WP_012253800.1">
    <property type="nucleotide sequence ID" value="NC_010172.1"/>
</dbReference>
<dbReference type="SMR" id="A9W5A7"/>
<dbReference type="KEGG" id="mex:Mext_2368"/>
<dbReference type="eggNOG" id="COG0126">
    <property type="taxonomic scope" value="Bacteria"/>
</dbReference>
<dbReference type="HOGENOM" id="CLU_025427_0_2_5"/>
<dbReference type="BioCyc" id="MEXT419610:MEXT_RS11930-MONOMER"/>
<dbReference type="UniPathway" id="UPA00109">
    <property type="reaction ID" value="UER00185"/>
</dbReference>
<dbReference type="GO" id="GO:0005829">
    <property type="term" value="C:cytosol"/>
    <property type="evidence" value="ECO:0007669"/>
    <property type="project" value="TreeGrafter"/>
</dbReference>
<dbReference type="GO" id="GO:0043531">
    <property type="term" value="F:ADP binding"/>
    <property type="evidence" value="ECO:0007669"/>
    <property type="project" value="TreeGrafter"/>
</dbReference>
<dbReference type="GO" id="GO:0005524">
    <property type="term" value="F:ATP binding"/>
    <property type="evidence" value="ECO:0007669"/>
    <property type="project" value="UniProtKB-KW"/>
</dbReference>
<dbReference type="GO" id="GO:0004618">
    <property type="term" value="F:phosphoglycerate kinase activity"/>
    <property type="evidence" value="ECO:0007669"/>
    <property type="project" value="UniProtKB-UniRule"/>
</dbReference>
<dbReference type="GO" id="GO:0006094">
    <property type="term" value="P:gluconeogenesis"/>
    <property type="evidence" value="ECO:0007669"/>
    <property type="project" value="TreeGrafter"/>
</dbReference>
<dbReference type="GO" id="GO:0006096">
    <property type="term" value="P:glycolytic process"/>
    <property type="evidence" value="ECO:0007669"/>
    <property type="project" value="UniProtKB-UniRule"/>
</dbReference>
<dbReference type="CDD" id="cd00318">
    <property type="entry name" value="Phosphoglycerate_kinase"/>
    <property type="match status" value="1"/>
</dbReference>
<dbReference type="FunFam" id="3.40.50.1260:FF:000006">
    <property type="entry name" value="Phosphoglycerate kinase"/>
    <property type="match status" value="1"/>
</dbReference>
<dbReference type="FunFam" id="3.40.50.1260:FF:000031">
    <property type="entry name" value="Phosphoglycerate kinase 1"/>
    <property type="match status" value="1"/>
</dbReference>
<dbReference type="Gene3D" id="3.40.50.1260">
    <property type="entry name" value="Phosphoglycerate kinase, N-terminal domain"/>
    <property type="match status" value="2"/>
</dbReference>
<dbReference type="HAMAP" id="MF_00145">
    <property type="entry name" value="Phosphoglyc_kinase"/>
    <property type="match status" value="1"/>
</dbReference>
<dbReference type="InterPro" id="IPR001576">
    <property type="entry name" value="Phosphoglycerate_kinase"/>
</dbReference>
<dbReference type="InterPro" id="IPR015911">
    <property type="entry name" value="Phosphoglycerate_kinase_CS"/>
</dbReference>
<dbReference type="InterPro" id="IPR015824">
    <property type="entry name" value="Phosphoglycerate_kinase_N"/>
</dbReference>
<dbReference type="InterPro" id="IPR036043">
    <property type="entry name" value="Phosphoglycerate_kinase_sf"/>
</dbReference>
<dbReference type="PANTHER" id="PTHR11406">
    <property type="entry name" value="PHOSPHOGLYCERATE KINASE"/>
    <property type="match status" value="1"/>
</dbReference>
<dbReference type="PANTHER" id="PTHR11406:SF23">
    <property type="entry name" value="PHOSPHOGLYCERATE KINASE 1, CHLOROPLASTIC-RELATED"/>
    <property type="match status" value="1"/>
</dbReference>
<dbReference type="Pfam" id="PF00162">
    <property type="entry name" value="PGK"/>
    <property type="match status" value="1"/>
</dbReference>
<dbReference type="PIRSF" id="PIRSF000724">
    <property type="entry name" value="Pgk"/>
    <property type="match status" value="1"/>
</dbReference>
<dbReference type="PRINTS" id="PR00477">
    <property type="entry name" value="PHGLYCKINASE"/>
</dbReference>
<dbReference type="SUPFAM" id="SSF53748">
    <property type="entry name" value="Phosphoglycerate kinase"/>
    <property type="match status" value="1"/>
</dbReference>
<dbReference type="PROSITE" id="PS00111">
    <property type="entry name" value="PGLYCERATE_KINASE"/>
    <property type="match status" value="1"/>
</dbReference>
<proteinExistence type="inferred from homology"/>
<reference key="1">
    <citation type="submission" date="2007-12" db="EMBL/GenBank/DDBJ databases">
        <title>Complete sequence of Methylobacterium extorquens PA1.</title>
        <authorList>
            <consortium name="US DOE Joint Genome Institute"/>
            <person name="Copeland A."/>
            <person name="Lucas S."/>
            <person name="Lapidus A."/>
            <person name="Barry K."/>
            <person name="Glavina del Rio T."/>
            <person name="Dalin E."/>
            <person name="Tice H."/>
            <person name="Pitluck S."/>
            <person name="Saunders E."/>
            <person name="Brettin T."/>
            <person name="Bruce D."/>
            <person name="Detter J.C."/>
            <person name="Han C."/>
            <person name="Schmutz J."/>
            <person name="Larimer F."/>
            <person name="Land M."/>
            <person name="Hauser L."/>
            <person name="Kyrpides N."/>
            <person name="Kim E."/>
            <person name="Marx C."/>
            <person name="Richardson P."/>
        </authorList>
    </citation>
    <scope>NUCLEOTIDE SEQUENCE [LARGE SCALE GENOMIC DNA]</scope>
    <source>
        <strain>PA1</strain>
    </source>
</reference>
<organism>
    <name type="scientific">Methylorubrum extorquens (strain PA1)</name>
    <name type="common">Methylobacterium extorquens</name>
    <dbReference type="NCBI Taxonomy" id="419610"/>
    <lineage>
        <taxon>Bacteria</taxon>
        <taxon>Pseudomonadati</taxon>
        <taxon>Pseudomonadota</taxon>
        <taxon>Alphaproteobacteria</taxon>
        <taxon>Hyphomicrobiales</taxon>
        <taxon>Methylobacteriaceae</taxon>
        <taxon>Methylorubrum</taxon>
    </lineage>
</organism>
<gene>
    <name evidence="1" type="primary">pgk</name>
    <name type="ordered locus">Mext_2368</name>
</gene>